<proteinExistence type="inferred from homology"/>
<comment type="catalytic activity">
    <reaction evidence="1">
        <text>CMP + ATP = CDP + ADP</text>
        <dbReference type="Rhea" id="RHEA:11600"/>
        <dbReference type="ChEBI" id="CHEBI:30616"/>
        <dbReference type="ChEBI" id="CHEBI:58069"/>
        <dbReference type="ChEBI" id="CHEBI:60377"/>
        <dbReference type="ChEBI" id="CHEBI:456216"/>
        <dbReference type="EC" id="2.7.4.25"/>
    </reaction>
</comment>
<comment type="catalytic activity">
    <reaction evidence="1">
        <text>dCMP + ATP = dCDP + ADP</text>
        <dbReference type="Rhea" id="RHEA:25094"/>
        <dbReference type="ChEBI" id="CHEBI:30616"/>
        <dbReference type="ChEBI" id="CHEBI:57566"/>
        <dbReference type="ChEBI" id="CHEBI:58593"/>
        <dbReference type="ChEBI" id="CHEBI:456216"/>
        <dbReference type="EC" id="2.7.4.25"/>
    </reaction>
</comment>
<comment type="subcellular location">
    <subcellularLocation>
        <location evidence="1">Cytoplasm</location>
    </subcellularLocation>
</comment>
<comment type="similarity">
    <text evidence="1">Belongs to the cytidylate kinase family. Type 1 subfamily.</text>
</comment>
<organism>
    <name type="scientific">Salmonella schwarzengrund (strain CVM19633)</name>
    <dbReference type="NCBI Taxonomy" id="439843"/>
    <lineage>
        <taxon>Bacteria</taxon>
        <taxon>Pseudomonadati</taxon>
        <taxon>Pseudomonadota</taxon>
        <taxon>Gammaproteobacteria</taxon>
        <taxon>Enterobacterales</taxon>
        <taxon>Enterobacteriaceae</taxon>
        <taxon>Salmonella</taxon>
    </lineage>
</organism>
<protein>
    <recommendedName>
        <fullName evidence="1">Cytidylate kinase</fullName>
        <shortName evidence="1">CK</shortName>
        <ecNumber evidence="1">2.7.4.25</ecNumber>
    </recommendedName>
    <alternativeName>
        <fullName evidence="1">Cytidine monophosphate kinase</fullName>
        <shortName evidence="1">CMP kinase</shortName>
    </alternativeName>
</protein>
<evidence type="ECO:0000255" key="1">
    <source>
        <dbReference type="HAMAP-Rule" id="MF_00238"/>
    </source>
</evidence>
<reference key="1">
    <citation type="journal article" date="2011" name="J. Bacteriol.">
        <title>Comparative genomics of 28 Salmonella enterica isolates: evidence for CRISPR-mediated adaptive sublineage evolution.</title>
        <authorList>
            <person name="Fricke W.F."/>
            <person name="Mammel M.K."/>
            <person name="McDermott P.F."/>
            <person name="Tartera C."/>
            <person name="White D.G."/>
            <person name="Leclerc J.E."/>
            <person name="Ravel J."/>
            <person name="Cebula T.A."/>
        </authorList>
    </citation>
    <scope>NUCLEOTIDE SEQUENCE [LARGE SCALE GENOMIC DNA]</scope>
    <source>
        <strain>CVM19633</strain>
    </source>
</reference>
<feature type="chain" id="PRO_1000100686" description="Cytidylate kinase">
    <location>
        <begin position="1"/>
        <end position="227"/>
    </location>
</feature>
<feature type="binding site" evidence="1">
    <location>
        <begin position="12"/>
        <end position="20"/>
    </location>
    <ligand>
        <name>ATP</name>
        <dbReference type="ChEBI" id="CHEBI:30616"/>
    </ligand>
</feature>
<keyword id="KW-0067">ATP-binding</keyword>
<keyword id="KW-0963">Cytoplasm</keyword>
<keyword id="KW-0418">Kinase</keyword>
<keyword id="KW-0547">Nucleotide-binding</keyword>
<keyword id="KW-0808">Transferase</keyword>
<accession>B4TRU1</accession>
<sequence>MTAIAPVITIDGPSGAGKGTLCKAMAEALQWHLLDSGAIYRVLALAALHHHVDLASEDALVPLASHLDVRFVSTDGNLEVILEGEDVSGEIRTQEVANAASQVAAFPRVREALLRRQRAFREAPGLIADGRDMGTVVFPDAPVKIFLDASSEERAHRRMLQLQENGFSVNFERLLAEIKERDDRDRNRAVAPLVPAADALVLDSTRLSIEQVIEKALQYARQKLALA</sequence>
<dbReference type="EC" id="2.7.4.25" evidence="1"/>
<dbReference type="EMBL" id="CP001127">
    <property type="protein sequence ID" value="ACF91136.1"/>
    <property type="molecule type" value="Genomic_DNA"/>
</dbReference>
<dbReference type="RefSeq" id="WP_000125007.1">
    <property type="nucleotide sequence ID" value="NC_011094.1"/>
</dbReference>
<dbReference type="SMR" id="B4TRU1"/>
<dbReference type="KEGG" id="sew:SeSA_A1093"/>
<dbReference type="HOGENOM" id="CLU_079959_0_2_6"/>
<dbReference type="Proteomes" id="UP000001865">
    <property type="component" value="Chromosome"/>
</dbReference>
<dbReference type="GO" id="GO:0005829">
    <property type="term" value="C:cytosol"/>
    <property type="evidence" value="ECO:0007669"/>
    <property type="project" value="TreeGrafter"/>
</dbReference>
<dbReference type="GO" id="GO:0005524">
    <property type="term" value="F:ATP binding"/>
    <property type="evidence" value="ECO:0007669"/>
    <property type="project" value="UniProtKB-UniRule"/>
</dbReference>
<dbReference type="GO" id="GO:0036430">
    <property type="term" value="F:CMP kinase activity"/>
    <property type="evidence" value="ECO:0007669"/>
    <property type="project" value="RHEA"/>
</dbReference>
<dbReference type="GO" id="GO:0036431">
    <property type="term" value="F:dCMP kinase activity"/>
    <property type="evidence" value="ECO:0007669"/>
    <property type="project" value="RHEA"/>
</dbReference>
<dbReference type="GO" id="GO:0015949">
    <property type="term" value="P:nucleobase-containing small molecule interconversion"/>
    <property type="evidence" value="ECO:0007669"/>
    <property type="project" value="TreeGrafter"/>
</dbReference>
<dbReference type="GO" id="GO:0006220">
    <property type="term" value="P:pyrimidine nucleotide metabolic process"/>
    <property type="evidence" value="ECO:0007669"/>
    <property type="project" value="UniProtKB-UniRule"/>
</dbReference>
<dbReference type="CDD" id="cd02020">
    <property type="entry name" value="CMPK"/>
    <property type="match status" value="1"/>
</dbReference>
<dbReference type="FunFam" id="3.40.50.300:FF:000262">
    <property type="entry name" value="Cytidylate kinase"/>
    <property type="match status" value="1"/>
</dbReference>
<dbReference type="Gene3D" id="3.40.50.300">
    <property type="entry name" value="P-loop containing nucleotide triphosphate hydrolases"/>
    <property type="match status" value="1"/>
</dbReference>
<dbReference type="HAMAP" id="MF_00238">
    <property type="entry name" value="Cytidyl_kinase_type1"/>
    <property type="match status" value="1"/>
</dbReference>
<dbReference type="InterPro" id="IPR003136">
    <property type="entry name" value="Cytidylate_kin"/>
</dbReference>
<dbReference type="InterPro" id="IPR011994">
    <property type="entry name" value="Cytidylate_kinase_dom"/>
</dbReference>
<dbReference type="InterPro" id="IPR027417">
    <property type="entry name" value="P-loop_NTPase"/>
</dbReference>
<dbReference type="NCBIfam" id="TIGR00017">
    <property type="entry name" value="cmk"/>
    <property type="match status" value="1"/>
</dbReference>
<dbReference type="PANTHER" id="PTHR21299:SF2">
    <property type="entry name" value="CYTIDYLATE KINASE"/>
    <property type="match status" value="1"/>
</dbReference>
<dbReference type="PANTHER" id="PTHR21299">
    <property type="entry name" value="CYTIDYLATE KINASE/PANTOATE-BETA-ALANINE LIGASE"/>
    <property type="match status" value="1"/>
</dbReference>
<dbReference type="Pfam" id="PF02224">
    <property type="entry name" value="Cytidylate_kin"/>
    <property type="match status" value="1"/>
</dbReference>
<dbReference type="SUPFAM" id="SSF52540">
    <property type="entry name" value="P-loop containing nucleoside triphosphate hydrolases"/>
    <property type="match status" value="1"/>
</dbReference>
<name>KCY_SALSV</name>
<gene>
    <name evidence="1" type="primary">cmk</name>
    <name type="ordered locus">SeSA_A1093</name>
</gene>